<feature type="chain" id="PRO_0000070305" description="Prophage tail fiber assembly protein homolog TfaE">
    <location>
        <begin position="1"/>
        <end position="200"/>
    </location>
</feature>
<feature type="sequence conflict" description="In Ref. 1; CAA25946." evidence="1" ref="1">
    <original>A</original>
    <variation>RRPFNIWRTGCINQFQCFQIIQPQIILFQLIFFKSSQCSLTLPLSAIDKISCIRDKHLLLKVRISDFIIMSTDNLFNRRRKNRKIDHASFSLRF</variation>
    <location>
        <position position="200"/>
    </location>
</feature>
<dbReference type="EMBL" id="X01805">
    <property type="protein sequence ID" value="CAA25946.1"/>
    <property type="molecule type" value="Genomic_DNA"/>
</dbReference>
<dbReference type="EMBL" id="U00096">
    <property type="protein sequence ID" value="AAC74240.1"/>
    <property type="molecule type" value="Genomic_DNA"/>
</dbReference>
<dbReference type="EMBL" id="AP009048">
    <property type="protein sequence ID" value="BAE76382.1"/>
    <property type="molecule type" value="Genomic_DNA"/>
</dbReference>
<dbReference type="PIR" id="A64861">
    <property type="entry name" value="A64861"/>
</dbReference>
<dbReference type="RefSeq" id="NP_415674.1">
    <property type="nucleotide sequence ID" value="NC_000913.3"/>
</dbReference>
<dbReference type="RefSeq" id="WP_000548498.1">
    <property type="nucleotide sequence ID" value="NZ_CP064683.1"/>
</dbReference>
<dbReference type="SMR" id="P09153"/>
<dbReference type="BioGRID" id="4262857">
    <property type="interactions" value="21"/>
</dbReference>
<dbReference type="BioGRID" id="850093">
    <property type="interactions" value="15"/>
</dbReference>
<dbReference type="FunCoup" id="P09153">
    <property type="interactions" value="78"/>
</dbReference>
<dbReference type="IntAct" id="P09153">
    <property type="interactions" value="16"/>
</dbReference>
<dbReference type="STRING" id="511145.b1156"/>
<dbReference type="PaxDb" id="511145-b1156"/>
<dbReference type="EnsemblBacteria" id="AAC74240">
    <property type="protein sequence ID" value="AAC74240"/>
    <property type="gene ID" value="b1156"/>
</dbReference>
<dbReference type="GeneID" id="945723"/>
<dbReference type="KEGG" id="ecj:JW1142"/>
<dbReference type="KEGG" id="eco:b1156"/>
<dbReference type="PATRIC" id="fig|511145.12.peg.1197"/>
<dbReference type="EchoBASE" id="EB1110"/>
<dbReference type="eggNOG" id="COG2110">
    <property type="taxonomic scope" value="Bacteria"/>
</dbReference>
<dbReference type="HOGENOM" id="CLU_094206_3_0_6"/>
<dbReference type="InParanoid" id="P09153"/>
<dbReference type="OMA" id="DLSAWEY"/>
<dbReference type="PhylomeDB" id="P09153"/>
<dbReference type="BioCyc" id="EcoCyc:EG11120-MONOMER"/>
<dbReference type="PRO" id="PR:P09153"/>
<dbReference type="Proteomes" id="UP000000625">
    <property type="component" value="Chromosome"/>
</dbReference>
<dbReference type="InterPro" id="IPR003458">
    <property type="entry name" value="Phage_T4_Gp38_tail_assem"/>
</dbReference>
<dbReference type="InterPro" id="IPR051220">
    <property type="entry name" value="TFA_Chaperone"/>
</dbReference>
<dbReference type="PANTHER" id="PTHR34413:SF2">
    <property type="entry name" value="PROPHAGE TAIL FIBER ASSEMBLY PROTEIN HOMOLOG TFAE-RELATED"/>
    <property type="match status" value="1"/>
</dbReference>
<dbReference type="PANTHER" id="PTHR34413">
    <property type="entry name" value="PROPHAGE TAIL FIBER ASSEMBLY PROTEIN HOMOLOG TFAE-RELATED-RELATED"/>
    <property type="match status" value="1"/>
</dbReference>
<dbReference type="Pfam" id="PF02413">
    <property type="entry name" value="Caudo_TAP"/>
    <property type="match status" value="1"/>
</dbReference>
<comment type="interaction">
    <interactant intactId="EBI-9133821">
        <id>P09153</id>
    </interactant>
    <interactant intactId="EBI-701156">
        <id>P0AFB5</id>
        <label>glnL</label>
    </interactant>
    <organismsDiffer>false</organismsDiffer>
    <experiments>4</experiments>
</comment>
<comment type="similarity">
    <text evidence="1">Belongs to the tfa family.</text>
</comment>
<organism>
    <name type="scientific">Escherichia coli (strain K12)</name>
    <dbReference type="NCBI Taxonomy" id="83333"/>
    <lineage>
        <taxon>Bacteria</taxon>
        <taxon>Pseudomonadati</taxon>
        <taxon>Pseudomonadota</taxon>
        <taxon>Gammaproteobacteria</taxon>
        <taxon>Enterobacterales</taxon>
        <taxon>Enterobacteriaceae</taxon>
        <taxon>Escherichia</taxon>
    </lineage>
</organism>
<proteinExistence type="evidence at protein level"/>
<keyword id="KW-1185">Reference proteome</keyword>
<name>TFAE_ECOLI</name>
<evidence type="ECO:0000305" key="1"/>
<gene>
    <name type="primary">tfaE</name>
    <name type="synonym">ycfA</name>
    <name type="ordered locus">b1156</name>
    <name type="ordered locus">JW1142</name>
</gene>
<accession>P09153</accession>
<accession>P75985</accession>
<accession>Q2MBH4</accession>
<sequence length="200" mass="21662">MHKAILNSDLIATKAGDVTVYNYDGETREYISTSNEYLAVGVGIPACSCLDAPGTHKAGYAICRSADFNSWEYVPDHRGETVYSTKTGESKEIKAPGDYPENTTTIAPLSPYDKWDGEKWVTDTEAQHSAAVDAAEAQRQSLIDAAMASISLIQLKLQAGRKLTQAETTRLNAVLDYIDAVTATDTSTAPDVIWPELPEA</sequence>
<reference key="1">
    <citation type="journal article" date="1985" name="EMBO J.">
        <title>The invertible P-DNA segment in the chromosome of Escherichia coli.</title>
        <authorList>
            <person name="Plasterk R.H.A."/>
            <person name="van de Putte P."/>
        </authorList>
    </citation>
    <scope>NUCLEOTIDE SEQUENCE [GENOMIC DNA]</scope>
    <source>
        <strain>K12</strain>
    </source>
</reference>
<reference key="2">
    <citation type="journal article" date="1997" name="Science">
        <title>The complete genome sequence of Escherichia coli K-12.</title>
        <authorList>
            <person name="Blattner F.R."/>
            <person name="Plunkett G. III"/>
            <person name="Bloch C.A."/>
            <person name="Perna N.T."/>
            <person name="Burland V."/>
            <person name="Riley M."/>
            <person name="Collado-Vides J."/>
            <person name="Glasner J.D."/>
            <person name="Rode C.K."/>
            <person name="Mayhew G.F."/>
            <person name="Gregor J."/>
            <person name="Davis N.W."/>
            <person name="Kirkpatrick H.A."/>
            <person name="Goeden M.A."/>
            <person name="Rose D.J."/>
            <person name="Mau B."/>
            <person name="Shao Y."/>
        </authorList>
    </citation>
    <scope>NUCLEOTIDE SEQUENCE [LARGE SCALE GENOMIC DNA]</scope>
    <source>
        <strain>K12 / MG1655 / ATCC 47076</strain>
    </source>
</reference>
<reference key="3">
    <citation type="journal article" date="2006" name="Mol. Syst. Biol.">
        <title>Highly accurate genome sequences of Escherichia coli K-12 strains MG1655 and W3110.</title>
        <authorList>
            <person name="Hayashi K."/>
            <person name="Morooka N."/>
            <person name="Yamamoto Y."/>
            <person name="Fujita K."/>
            <person name="Isono K."/>
            <person name="Choi S."/>
            <person name="Ohtsubo E."/>
            <person name="Baba T."/>
            <person name="Wanner B.L."/>
            <person name="Mori H."/>
            <person name="Horiuchi T."/>
        </authorList>
    </citation>
    <scope>NUCLEOTIDE SEQUENCE [LARGE SCALE GENOMIC DNA]</scope>
    <source>
        <strain>K12 / W3110 / ATCC 27325 / DSM 5911</strain>
    </source>
</reference>
<protein>
    <recommendedName>
        <fullName evidence="1">Prophage tail fiber assembly protein homolog TfaE</fullName>
    </recommendedName>
    <alternativeName>
        <fullName>Tail fiber assembly protein homolog from lambdoid prophage e14</fullName>
    </alternativeName>
</protein>